<feature type="chain" id="PRO_0000385776" description="GTPase Obg">
    <location>
        <begin position="1"/>
        <end position="370"/>
    </location>
</feature>
<feature type="domain" description="Obg" evidence="2">
    <location>
        <begin position="1"/>
        <end position="159"/>
    </location>
</feature>
<feature type="domain" description="OBG-type G" evidence="1">
    <location>
        <begin position="160"/>
        <end position="334"/>
    </location>
</feature>
<feature type="region of interest" description="Disordered" evidence="3">
    <location>
        <begin position="344"/>
        <end position="370"/>
    </location>
</feature>
<feature type="binding site" evidence="1">
    <location>
        <begin position="166"/>
        <end position="173"/>
    </location>
    <ligand>
        <name>GTP</name>
        <dbReference type="ChEBI" id="CHEBI:37565"/>
    </ligand>
</feature>
<feature type="binding site" evidence="1">
    <location>
        <position position="173"/>
    </location>
    <ligand>
        <name>Mg(2+)</name>
        <dbReference type="ChEBI" id="CHEBI:18420"/>
    </ligand>
</feature>
<feature type="binding site" evidence="1">
    <location>
        <begin position="191"/>
        <end position="195"/>
    </location>
    <ligand>
        <name>GTP</name>
        <dbReference type="ChEBI" id="CHEBI:37565"/>
    </ligand>
</feature>
<feature type="binding site" evidence="1">
    <location>
        <position position="193"/>
    </location>
    <ligand>
        <name>Mg(2+)</name>
        <dbReference type="ChEBI" id="CHEBI:18420"/>
    </ligand>
</feature>
<feature type="binding site" evidence="1">
    <location>
        <begin position="213"/>
        <end position="216"/>
    </location>
    <ligand>
        <name>GTP</name>
        <dbReference type="ChEBI" id="CHEBI:37565"/>
    </ligand>
</feature>
<feature type="binding site" evidence="1">
    <location>
        <begin position="284"/>
        <end position="287"/>
    </location>
    <ligand>
        <name>GTP</name>
        <dbReference type="ChEBI" id="CHEBI:37565"/>
    </ligand>
</feature>
<feature type="binding site" evidence="1">
    <location>
        <begin position="315"/>
        <end position="317"/>
    </location>
    <ligand>
        <name>GTP</name>
        <dbReference type="ChEBI" id="CHEBI:37565"/>
    </ligand>
</feature>
<keyword id="KW-0963">Cytoplasm</keyword>
<keyword id="KW-0342">GTP-binding</keyword>
<keyword id="KW-0378">Hydrolase</keyword>
<keyword id="KW-0460">Magnesium</keyword>
<keyword id="KW-0479">Metal-binding</keyword>
<keyword id="KW-0547">Nucleotide-binding</keyword>
<comment type="function">
    <text evidence="1">An essential GTPase which binds GTP, GDP and possibly (p)ppGpp with moderate affinity, with high nucleotide exchange rates and a fairly low GTP hydrolysis rate. Plays a role in control of the cell cycle, stress response, ribosome biogenesis and in those bacteria that undergo differentiation, in morphogenesis control.</text>
</comment>
<comment type="cofactor">
    <cofactor evidence="1">
        <name>Mg(2+)</name>
        <dbReference type="ChEBI" id="CHEBI:18420"/>
    </cofactor>
</comment>
<comment type="subunit">
    <text evidence="1">Monomer.</text>
</comment>
<comment type="subcellular location">
    <subcellularLocation>
        <location evidence="1">Cytoplasm</location>
    </subcellularLocation>
</comment>
<comment type="similarity">
    <text evidence="1">Belongs to the TRAFAC class OBG-HflX-like GTPase superfamily. OBG GTPase family.</text>
</comment>
<proteinExistence type="inferred from homology"/>
<protein>
    <recommendedName>
        <fullName evidence="1">GTPase Obg</fullName>
        <ecNumber evidence="1">3.6.5.-</ecNumber>
    </recommendedName>
    <alternativeName>
        <fullName evidence="1">GTP-binding protein Obg</fullName>
    </alternativeName>
</protein>
<dbReference type="EC" id="3.6.5.-" evidence="1"/>
<dbReference type="EMBL" id="CP000440">
    <property type="protein sequence ID" value="ABI86045.1"/>
    <property type="molecule type" value="Genomic_DNA"/>
</dbReference>
<dbReference type="RefSeq" id="WP_011655906.1">
    <property type="nucleotide sequence ID" value="NC_008390.1"/>
</dbReference>
<dbReference type="SMR" id="Q0BIH8"/>
<dbReference type="GeneID" id="93084096"/>
<dbReference type="KEGG" id="bam:Bamb_0486"/>
<dbReference type="PATRIC" id="fig|339670.21.peg.1120"/>
<dbReference type="eggNOG" id="COG0536">
    <property type="taxonomic scope" value="Bacteria"/>
</dbReference>
<dbReference type="Proteomes" id="UP000000662">
    <property type="component" value="Chromosome 1"/>
</dbReference>
<dbReference type="GO" id="GO:0005737">
    <property type="term" value="C:cytoplasm"/>
    <property type="evidence" value="ECO:0007669"/>
    <property type="project" value="UniProtKB-SubCell"/>
</dbReference>
<dbReference type="GO" id="GO:0005525">
    <property type="term" value="F:GTP binding"/>
    <property type="evidence" value="ECO:0007669"/>
    <property type="project" value="UniProtKB-UniRule"/>
</dbReference>
<dbReference type="GO" id="GO:0003924">
    <property type="term" value="F:GTPase activity"/>
    <property type="evidence" value="ECO:0007669"/>
    <property type="project" value="UniProtKB-UniRule"/>
</dbReference>
<dbReference type="GO" id="GO:0000287">
    <property type="term" value="F:magnesium ion binding"/>
    <property type="evidence" value="ECO:0007669"/>
    <property type="project" value="InterPro"/>
</dbReference>
<dbReference type="GO" id="GO:0042254">
    <property type="term" value="P:ribosome biogenesis"/>
    <property type="evidence" value="ECO:0007669"/>
    <property type="project" value="UniProtKB-UniRule"/>
</dbReference>
<dbReference type="CDD" id="cd01898">
    <property type="entry name" value="Obg"/>
    <property type="match status" value="1"/>
</dbReference>
<dbReference type="FunFam" id="2.70.210.12:FF:000001">
    <property type="entry name" value="GTPase Obg"/>
    <property type="match status" value="1"/>
</dbReference>
<dbReference type="Gene3D" id="2.70.210.12">
    <property type="entry name" value="GTP1/OBG domain"/>
    <property type="match status" value="1"/>
</dbReference>
<dbReference type="Gene3D" id="3.40.50.300">
    <property type="entry name" value="P-loop containing nucleotide triphosphate hydrolases"/>
    <property type="match status" value="1"/>
</dbReference>
<dbReference type="HAMAP" id="MF_01454">
    <property type="entry name" value="GTPase_Obg"/>
    <property type="match status" value="1"/>
</dbReference>
<dbReference type="InterPro" id="IPR031167">
    <property type="entry name" value="G_OBG"/>
</dbReference>
<dbReference type="InterPro" id="IPR006073">
    <property type="entry name" value="GTP-bd"/>
</dbReference>
<dbReference type="InterPro" id="IPR014100">
    <property type="entry name" value="GTP-bd_Obg/CgtA"/>
</dbReference>
<dbReference type="InterPro" id="IPR006074">
    <property type="entry name" value="GTP1-OBG_CS"/>
</dbReference>
<dbReference type="InterPro" id="IPR006169">
    <property type="entry name" value="GTP1_OBG_dom"/>
</dbReference>
<dbReference type="InterPro" id="IPR036726">
    <property type="entry name" value="GTP1_OBG_dom_sf"/>
</dbReference>
<dbReference type="InterPro" id="IPR045086">
    <property type="entry name" value="OBG_GTPase"/>
</dbReference>
<dbReference type="InterPro" id="IPR027417">
    <property type="entry name" value="P-loop_NTPase"/>
</dbReference>
<dbReference type="NCBIfam" id="TIGR02729">
    <property type="entry name" value="Obg_CgtA"/>
    <property type="match status" value="1"/>
</dbReference>
<dbReference type="NCBIfam" id="NF008954">
    <property type="entry name" value="PRK12296.1"/>
    <property type="match status" value="1"/>
</dbReference>
<dbReference type="NCBIfam" id="NF008955">
    <property type="entry name" value="PRK12297.1"/>
    <property type="match status" value="1"/>
</dbReference>
<dbReference type="NCBIfam" id="NF008956">
    <property type="entry name" value="PRK12299.1"/>
    <property type="match status" value="1"/>
</dbReference>
<dbReference type="PANTHER" id="PTHR11702">
    <property type="entry name" value="DEVELOPMENTALLY REGULATED GTP-BINDING PROTEIN-RELATED"/>
    <property type="match status" value="1"/>
</dbReference>
<dbReference type="PANTHER" id="PTHR11702:SF31">
    <property type="entry name" value="MITOCHONDRIAL RIBOSOME-ASSOCIATED GTPASE 2"/>
    <property type="match status" value="1"/>
</dbReference>
<dbReference type="Pfam" id="PF01018">
    <property type="entry name" value="GTP1_OBG"/>
    <property type="match status" value="1"/>
</dbReference>
<dbReference type="Pfam" id="PF01926">
    <property type="entry name" value="MMR_HSR1"/>
    <property type="match status" value="1"/>
</dbReference>
<dbReference type="PIRSF" id="PIRSF002401">
    <property type="entry name" value="GTP_bd_Obg/CgtA"/>
    <property type="match status" value="1"/>
</dbReference>
<dbReference type="PRINTS" id="PR00326">
    <property type="entry name" value="GTP1OBG"/>
</dbReference>
<dbReference type="SUPFAM" id="SSF82051">
    <property type="entry name" value="Obg GTP-binding protein N-terminal domain"/>
    <property type="match status" value="1"/>
</dbReference>
<dbReference type="SUPFAM" id="SSF52540">
    <property type="entry name" value="P-loop containing nucleoside triphosphate hydrolases"/>
    <property type="match status" value="1"/>
</dbReference>
<dbReference type="PROSITE" id="PS51710">
    <property type="entry name" value="G_OBG"/>
    <property type="match status" value="1"/>
</dbReference>
<dbReference type="PROSITE" id="PS00905">
    <property type="entry name" value="GTP1_OBG"/>
    <property type="match status" value="1"/>
</dbReference>
<dbReference type="PROSITE" id="PS51883">
    <property type="entry name" value="OBG"/>
    <property type="match status" value="1"/>
</dbReference>
<evidence type="ECO:0000255" key="1">
    <source>
        <dbReference type="HAMAP-Rule" id="MF_01454"/>
    </source>
</evidence>
<evidence type="ECO:0000255" key="2">
    <source>
        <dbReference type="PROSITE-ProRule" id="PRU01231"/>
    </source>
</evidence>
<evidence type="ECO:0000256" key="3">
    <source>
        <dbReference type="SAM" id="MobiDB-lite"/>
    </source>
</evidence>
<accession>Q0BIH8</accession>
<reference key="1">
    <citation type="submission" date="2006-08" db="EMBL/GenBank/DDBJ databases">
        <title>Complete sequence of chromosome 1 of Burkholderia cepacia AMMD.</title>
        <authorList>
            <person name="Copeland A."/>
            <person name="Lucas S."/>
            <person name="Lapidus A."/>
            <person name="Barry K."/>
            <person name="Detter J.C."/>
            <person name="Glavina del Rio T."/>
            <person name="Hammon N."/>
            <person name="Israni S."/>
            <person name="Pitluck S."/>
            <person name="Bruce D."/>
            <person name="Chain P."/>
            <person name="Malfatti S."/>
            <person name="Shin M."/>
            <person name="Vergez L."/>
            <person name="Schmutz J."/>
            <person name="Larimer F."/>
            <person name="Land M."/>
            <person name="Hauser L."/>
            <person name="Kyrpides N."/>
            <person name="Kim E."/>
            <person name="Parke J."/>
            <person name="Coenye T."/>
            <person name="Konstantinidis K."/>
            <person name="Ramette A."/>
            <person name="Tiedje J."/>
            <person name="Richardson P."/>
        </authorList>
    </citation>
    <scope>NUCLEOTIDE SEQUENCE [LARGE SCALE GENOMIC DNA]</scope>
    <source>
        <strain>ATCC BAA-244 / DSM 16087 / CCUG 44356 / LMG 19182 / AMMD</strain>
    </source>
</reference>
<sequence>MKFIDEARIEVIAGDGGDGSASMRREKFVPFGGPDGGDGGRGGNVYAIADRNINTLIDYRYAKKHLARNGENGRGSDCYGKGGDDVTLRMPVGTVVTDMDTGELIADLTEHGQQVMLAQGGAGGLGNLHFKSSTNRAPRQKTDGKPGERRMLRLELKVLADVGLLGMPNAGKSTFISSVSNAKPKIADYPFTTLAPNLGVVRVGPSKSFVIADIPGLIEGAAEGAGLGHQFLRHLQRTGVLLHLVDLAPFDENVDPVAEARAIVGELRKYDEALYEKPRWLVLNKLDMVPEDEREARVADFLARFEWDGPVFEISALTGQGCEALCYAIYDYLAEHSDAHRAAEEEDLATDVRFRDAPPADGGATPGDDA</sequence>
<name>OBG_BURCM</name>
<organism>
    <name type="scientific">Burkholderia ambifaria (strain ATCC BAA-244 / DSM 16087 / CCUG 44356 / LMG 19182 / AMMD)</name>
    <name type="common">Burkholderia cepacia (strain AMMD)</name>
    <dbReference type="NCBI Taxonomy" id="339670"/>
    <lineage>
        <taxon>Bacteria</taxon>
        <taxon>Pseudomonadati</taxon>
        <taxon>Pseudomonadota</taxon>
        <taxon>Betaproteobacteria</taxon>
        <taxon>Burkholderiales</taxon>
        <taxon>Burkholderiaceae</taxon>
        <taxon>Burkholderia</taxon>
        <taxon>Burkholderia cepacia complex</taxon>
    </lineage>
</organism>
<gene>
    <name evidence="1" type="primary">obg</name>
    <name type="ordered locus">Bamb_0486</name>
</gene>